<accession>Q8ZI60</accession>
<accession>Q0WJ16</accession>
<accession>Q74RQ3</accession>
<accession>Q8CZS0</accession>
<sequence length="476" mass="51218">MKVTLPDFRRAGVLVVGDVMLDRYWYGPTCRISPEAPVPVVKVDTIEERPGGAANVAMNIASLGAVARLVGLTGIDDAARALICKLSEVRVRCDFVSVPTHPTITKLRVLSRNQQLIRLDFEEGFDGVDPTPIFERIQLALPQIGALVLSDYAKGALNSVQPMIQLARKANVPVLIDPKGSDFERYRGATLLTPNLSEFEAVVGRCKNEEELVNRGMQLVADFELSALLVTRSEQGMTLLQLGKPPLHLPTQAKEVFDVTGAGDTVIGVLAAALAAGNSLEESCFLANAAAGVVVGKLGTSTVSPIELENAIRGRAETGFGVMDEQQLKIAVAQARQRGEKVVMTNGIFDILHAGHVSYLANARKLGDRLIVAVNSDASTKRLKGEKRPVNPLEQRMVVLGALEAVDWVVPFEEDTPQRLIADILPDLLVKGGDYKPHEIAGSEEVWAAGGEVKVLNFEDGVSTTNIIQSIKNGRG</sequence>
<name>HLDE_YERPE</name>
<gene>
    <name evidence="1" type="primary">hldE</name>
    <name type="synonym">rfaE</name>
    <name type="synonym">waaE</name>
    <name type="ordered locus">YPO0654</name>
    <name type="ordered locus">y3524</name>
    <name type="ordered locus">YP_2969</name>
</gene>
<evidence type="ECO:0000255" key="1">
    <source>
        <dbReference type="HAMAP-Rule" id="MF_01603"/>
    </source>
</evidence>
<evidence type="ECO:0000305" key="2"/>
<keyword id="KW-0067">ATP-binding</keyword>
<keyword id="KW-0119">Carbohydrate metabolism</keyword>
<keyword id="KW-0418">Kinase</keyword>
<keyword id="KW-0448">Lipopolysaccharide biosynthesis</keyword>
<keyword id="KW-0511">Multifunctional enzyme</keyword>
<keyword id="KW-0547">Nucleotide-binding</keyword>
<keyword id="KW-0548">Nucleotidyltransferase</keyword>
<keyword id="KW-1185">Reference proteome</keyword>
<keyword id="KW-0808">Transferase</keyword>
<comment type="function">
    <text evidence="1">Catalyzes the phosphorylation of D-glycero-D-manno-heptose 7-phosphate at the C-1 position to selectively form D-glycero-beta-D-manno-heptose-1,7-bisphosphate.</text>
</comment>
<comment type="function">
    <text evidence="1">Catalyzes the ADP transfer from ATP to D-glycero-beta-D-manno-heptose 1-phosphate, yielding ADP-D-glycero-beta-D-manno-heptose.</text>
</comment>
<comment type="catalytic activity">
    <reaction evidence="1">
        <text>D-glycero-beta-D-manno-heptose 7-phosphate + ATP = D-glycero-beta-D-manno-heptose 1,7-bisphosphate + ADP + H(+)</text>
        <dbReference type="Rhea" id="RHEA:27473"/>
        <dbReference type="ChEBI" id="CHEBI:15378"/>
        <dbReference type="ChEBI" id="CHEBI:30616"/>
        <dbReference type="ChEBI" id="CHEBI:60204"/>
        <dbReference type="ChEBI" id="CHEBI:60208"/>
        <dbReference type="ChEBI" id="CHEBI:456216"/>
        <dbReference type="EC" id="2.7.1.167"/>
    </reaction>
</comment>
<comment type="catalytic activity">
    <reaction evidence="1">
        <text>D-glycero-beta-D-manno-heptose 1-phosphate + ATP + H(+) = ADP-D-glycero-beta-D-manno-heptose + diphosphate</text>
        <dbReference type="Rhea" id="RHEA:27465"/>
        <dbReference type="ChEBI" id="CHEBI:15378"/>
        <dbReference type="ChEBI" id="CHEBI:30616"/>
        <dbReference type="ChEBI" id="CHEBI:33019"/>
        <dbReference type="ChEBI" id="CHEBI:59967"/>
        <dbReference type="ChEBI" id="CHEBI:61593"/>
        <dbReference type="EC" id="2.7.7.70"/>
    </reaction>
</comment>
<comment type="pathway">
    <text evidence="1">Nucleotide-sugar biosynthesis; ADP-L-glycero-beta-D-manno-heptose biosynthesis; ADP-L-glycero-beta-D-manno-heptose from D-glycero-beta-D-manno-heptose 7-phosphate: step 1/4.</text>
</comment>
<comment type="pathway">
    <text evidence="1">Nucleotide-sugar biosynthesis; ADP-L-glycero-beta-D-manno-heptose biosynthesis; ADP-L-glycero-beta-D-manno-heptose from D-glycero-beta-D-manno-heptose 7-phosphate: step 3/4.</text>
</comment>
<comment type="pathway">
    <text>Bacterial outer membrane biogenesis; LPS core biosynthesis.</text>
</comment>
<comment type="subunit">
    <text evidence="1">Homodimer.</text>
</comment>
<comment type="similarity">
    <text evidence="1">In the N-terminal section; belongs to the carbohydrate kinase PfkB family.</text>
</comment>
<comment type="similarity">
    <text evidence="1">In the C-terminal section; belongs to the cytidylyltransferase family.</text>
</comment>
<comment type="sequence caution" evidence="2">
    <conflict type="erroneous initiation">
        <sequence resource="EMBL-CDS" id="AAM87072"/>
    </conflict>
</comment>
<comment type="sequence caution" evidence="2">
    <conflict type="erroneous initiation">
        <sequence resource="EMBL-CDS" id="AAS63148"/>
    </conflict>
</comment>
<proteinExistence type="inferred from homology"/>
<dbReference type="EC" id="2.7.1.167" evidence="1"/>
<dbReference type="EC" id="2.7.7.70" evidence="1"/>
<dbReference type="EMBL" id="AL590842">
    <property type="protein sequence ID" value="CAL19331.1"/>
    <property type="molecule type" value="Genomic_DNA"/>
</dbReference>
<dbReference type="EMBL" id="AE009952">
    <property type="protein sequence ID" value="AAM87072.1"/>
    <property type="status" value="ALT_INIT"/>
    <property type="molecule type" value="Genomic_DNA"/>
</dbReference>
<dbReference type="EMBL" id="AE017042">
    <property type="protein sequence ID" value="AAS63148.1"/>
    <property type="status" value="ALT_INIT"/>
    <property type="molecule type" value="Genomic_DNA"/>
</dbReference>
<dbReference type="PIR" id="AI0080">
    <property type="entry name" value="AI0080"/>
</dbReference>
<dbReference type="RefSeq" id="WP_002212193.1">
    <property type="nucleotide sequence ID" value="NZ_WUCM01000022.1"/>
</dbReference>
<dbReference type="RefSeq" id="YP_002345722.1">
    <property type="nucleotide sequence ID" value="NC_003143.1"/>
</dbReference>
<dbReference type="SMR" id="Q8ZI60"/>
<dbReference type="IntAct" id="Q8ZI60">
    <property type="interactions" value="3"/>
</dbReference>
<dbReference type="STRING" id="214092.YPO0654"/>
<dbReference type="PaxDb" id="214092-YPO0654"/>
<dbReference type="DNASU" id="1148471"/>
<dbReference type="EnsemblBacteria" id="AAS63148">
    <property type="protein sequence ID" value="AAS63148"/>
    <property type="gene ID" value="YP_2969"/>
</dbReference>
<dbReference type="GeneID" id="57973970"/>
<dbReference type="KEGG" id="ype:YPO0654"/>
<dbReference type="KEGG" id="ypk:y3524"/>
<dbReference type="KEGG" id="ypm:YP_2969"/>
<dbReference type="PATRIC" id="fig|214092.21.peg.913"/>
<dbReference type="eggNOG" id="COG0615">
    <property type="taxonomic scope" value="Bacteria"/>
</dbReference>
<dbReference type="eggNOG" id="COG2870">
    <property type="taxonomic scope" value="Bacteria"/>
</dbReference>
<dbReference type="HOGENOM" id="CLU_021150_2_1_6"/>
<dbReference type="OMA" id="ILNQTHP"/>
<dbReference type="OrthoDB" id="9802794at2"/>
<dbReference type="UniPathway" id="UPA00356">
    <property type="reaction ID" value="UER00437"/>
</dbReference>
<dbReference type="UniPathway" id="UPA00356">
    <property type="reaction ID" value="UER00439"/>
</dbReference>
<dbReference type="UniPathway" id="UPA00958"/>
<dbReference type="Proteomes" id="UP000000815">
    <property type="component" value="Chromosome"/>
</dbReference>
<dbReference type="Proteomes" id="UP000001019">
    <property type="component" value="Chromosome"/>
</dbReference>
<dbReference type="Proteomes" id="UP000002490">
    <property type="component" value="Chromosome"/>
</dbReference>
<dbReference type="GO" id="GO:0005829">
    <property type="term" value="C:cytosol"/>
    <property type="evidence" value="ECO:0000318"/>
    <property type="project" value="GO_Central"/>
</dbReference>
<dbReference type="GO" id="GO:0005524">
    <property type="term" value="F:ATP binding"/>
    <property type="evidence" value="ECO:0007669"/>
    <property type="project" value="UniProtKB-UniRule"/>
</dbReference>
<dbReference type="GO" id="GO:0033785">
    <property type="term" value="F:heptose 7-phosphate kinase activity"/>
    <property type="evidence" value="ECO:0000318"/>
    <property type="project" value="GO_Central"/>
</dbReference>
<dbReference type="GO" id="GO:0033786">
    <property type="term" value="F:heptose-1-phosphate adenylyltransferase activity"/>
    <property type="evidence" value="ECO:0000318"/>
    <property type="project" value="GO_Central"/>
</dbReference>
<dbReference type="GO" id="GO:0016773">
    <property type="term" value="F:phosphotransferase activity, alcohol group as acceptor"/>
    <property type="evidence" value="ECO:0007669"/>
    <property type="project" value="InterPro"/>
</dbReference>
<dbReference type="GO" id="GO:0097171">
    <property type="term" value="P:ADP-L-glycero-beta-D-manno-heptose biosynthetic process"/>
    <property type="evidence" value="ECO:0007669"/>
    <property type="project" value="UniProtKB-UniPathway"/>
</dbReference>
<dbReference type="GO" id="GO:0009244">
    <property type="term" value="P:lipopolysaccharide core region biosynthetic process"/>
    <property type="evidence" value="ECO:0007669"/>
    <property type="project" value="UniProtKB-UniPathway"/>
</dbReference>
<dbReference type="CDD" id="cd01172">
    <property type="entry name" value="RfaE_like"/>
    <property type="match status" value="1"/>
</dbReference>
<dbReference type="FunFam" id="3.40.1190.20:FF:000002">
    <property type="entry name" value="Bifunctional protein HldE"/>
    <property type="match status" value="1"/>
</dbReference>
<dbReference type="FunFam" id="3.40.50.620:FF:000028">
    <property type="entry name" value="Bifunctional protein HldE"/>
    <property type="match status" value="1"/>
</dbReference>
<dbReference type="Gene3D" id="3.40.1190.20">
    <property type="match status" value="1"/>
</dbReference>
<dbReference type="Gene3D" id="3.40.50.620">
    <property type="entry name" value="HUPs"/>
    <property type="match status" value="1"/>
</dbReference>
<dbReference type="HAMAP" id="MF_01603">
    <property type="entry name" value="HldE"/>
    <property type="match status" value="1"/>
</dbReference>
<dbReference type="InterPro" id="IPR023030">
    <property type="entry name" value="Bifunc_HldE"/>
</dbReference>
<dbReference type="InterPro" id="IPR002173">
    <property type="entry name" value="Carboh/pur_kinase_PfkB_CS"/>
</dbReference>
<dbReference type="InterPro" id="IPR004821">
    <property type="entry name" value="Cyt_trans-like"/>
</dbReference>
<dbReference type="InterPro" id="IPR011611">
    <property type="entry name" value="PfkB_dom"/>
</dbReference>
<dbReference type="InterPro" id="IPR011913">
    <property type="entry name" value="RfaE_dom_I"/>
</dbReference>
<dbReference type="InterPro" id="IPR011914">
    <property type="entry name" value="RfaE_dom_II"/>
</dbReference>
<dbReference type="InterPro" id="IPR029056">
    <property type="entry name" value="Ribokinase-like"/>
</dbReference>
<dbReference type="InterPro" id="IPR014729">
    <property type="entry name" value="Rossmann-like_a/b/a_fold"/>
</dbReference>
<dbReference type="NCBIfam" id="TIGR00125">
    <property type="entry name" value="cyt_tran_rel"/>
    <property type="match status" value="1"/>
</dbReference>
<dbReference type="NCBIfam" id="NF008454">
    <property type="entry name" value="PRK11316.1"/>
    <property type="match status" value="1"/>
</dbReference>
<dbReference type="NCBIfam" id="TIGR02198">
    <property type="entry name" value="rfaE_dom_I"/>
    <property type="match status" value="1"/>
</dbReference>
<dbReference type="NCBIfam" id="TIGR02199">
    <property type="entry name" value="rfaE_dom_II"/>
    <property type="match status" value="1"/>
</dbReference>
<dbReference type="PANTHER" id="PTHR46969">
    <property type="entry name" value="BIFUNCTIONAL PROTEIN HLDE"/>
    <property type="match status" value="1"/>
</dbReference>
<dbReference type="PANTHER" id="PTHR46969:SF1">
    <property type="entry name" value="BIFUNCTIONAL PROTEIN HLDE"/>
    <property type="match status" value="1"/>
</dbReference>
<dbReference type="Pfam" id="PF01467">
    <property type="entry name" value="CTP_transf_like"/>
    <property type="match status" value="1"/>
</dbReference>
<dbReference type="Pfam" id="PF00294">
    <property type="entry name" value="PfkB"/>
    <property type="match status" value="1"/>
</dbReference>
<dbReference type="SUPFAM" id="SSF52374">
    <property type="entry name" value="Nucleotidylyl transferase"/>
    <property type="match status" value="1"/>
</dbReference>
<dbReference type="SUPFAM" id="SSF53613">
    <property type="entry name" value="Ribokinase-like"/>
    <property type="match status" value="1"/>
</dbReference>
<dbReference type="PROSITE" id="PS00583">
    <property type="entry name" value="PFKB_KINASES_1"/>
    <property type="match status" value="1"/>
</dbReference>
<reference key="1">
    <citation type="journal article" date="2001" name="Nature">
        <title>Genome sequence of Yersinia pestis, the causative agent of plague.</title>
        <authorList>
            <person name="Parkhill J."/>
            <person name="Wren B.W."/>
            <person name="Thomson N.R."/>
            <person name="Titball R.W."/>
            <person name="Holden M.T.G."/>
            <person name="Prentice M.B."/>
            <person name="Sebaihia M."/>
            <person name="James K.D."/>
            <person name="Churcher C.M."/>
            <person name="Mungall K.L."/>
            <person name="Baker S."/>
            <person name="Basham D."/>
            <person name="Bentley S.D."/>
            <person name="Brooks K."/>
            <person name="Cerdeno-Tarraga A.-M."/>
            <person name="Chillingworth T."/>
            <person name="Cronin A."/>
            <person name="Davies R.M."/>
            <person name="Davis P."/>
            <person name="Dougan G."/>
            <person name="Feltwell T."/>
            <person name="Hamlin N."/>
            <person name="Holroyd S."/>
            <person name="Jagels K."/>
            <person name="Karlyshev A.V."/>
            <person name="Leather S."/>
            <person name="Moule S."/>
            <person name="Oyston P.C.F."/>
            <person name="Quail M.A."/>
            <person name="Rutherford K.M."/>
            <person name="Simmonds M."/>
            <person name="Skelton J."/>
            <person name="Stevens K."/>
            <person name="Whitehead S."/>
            <person name="Barrell B.G."/>
        </authorList>
    </citation>
    <scope>NUCLEOTIDE SEQUENCE [LARGE SCALE GENOMIC DNA]</scope>
    <source>
        <strain>CO-92 / Biovar Orientalis</strain>
    </source>
</reference>
<reference key="2">
    <citation type="journal article" date="2002" name="J. Bacteriol.">
        <title>Genome sequence of Yersinia pestis KIM.</title>
        <authorList>
            <person name="Deng W."/>
            <person name="Burland V."/>
            <person name="Plunkett G. III"/>
            <person name="Boutin A."/>
            <person name="Mayhew G.F."/>
            <person name="Liss P."/>
            <person name="Perna N.T."/>
            <person name="Rose D.J."/>
            <person name="Mau B."/>
            <person name="Zhou S."/>
            <person name="Schwartz D.C."/>
            <person name="Fetherston J.D."/>
            <person name="Lindler L.E."/>
            <person name="Brubaker R.R."/>
            <person name="Plano G.V."/>
            <person name="Straley S.C."/>
            <person name="McDonough K.A."/>
            <person name="Nilles M.L."/>
            <person name="Matson J.S."/>
            <person name="Blattner F.R."/>
            <person name="Perry R.D."/>
        </authorList>
    </citation>
    <scope>NUCLEOTIDE SEQUENCE [LARGE SCALE GENOMIC DNA]</scope>
    <source>
        <strain>KIM10+ / Biovar Mediaevalis</strain>
    </source>
</reference>
<reference key="3">
    <citation type="journal article" date="2004" name="DNA Res.">
        <title>Complete genome sequence of Yersinia pestis strain 91001, an isolate avirulent to humans.</title>
        <authorList>
            <person name="Song Y."/>
            <person name="Tong Z."/>
            <person name="Wang J."/>
            <person name="Wang L."/>
            <person name="Guo Z."/>
            <person name="Han Y."/>
            <person name="Zhang J."/>
            <person name="Pei D."/>
            <person name="Zhou D."/>
            <person name="Qin H."/>
            <person name="Pang X."/>
            <person name="Han Y."/>
            <person name="Zhai J."/>
            <person name="Li M."/>
            <person name="Cui B."/>
            <person name="Qi Z."/>
            <person name="Jin L."/>
            <person name="Dai R."/>
            <person name="Chen F."/>
            <person name="Li S."/>
            <person name="Ye C."/>
            <person name="Du Z."/>
            <person name="Lin W."/>
            <person name="Wang J."/>
            <person name="Yu J."/>
            <person name="Yang H."/>
            <person name="Wang J."/>
            <person name="Huang P."/>
            <person name="Yang R."/>
        </authorList>
    </citation>
    <scope>NUCLEOTIDE SEQUENCE [LARGE SCALE GENOMIC DNA]</scope>
    <source>
        <strain>91001 / Biovar Mediaevalis</strain>
    </source>
</reference>
<organism>
    <name type="scientific">Yersinia pestis</name>
    <dbReference type="NCBI Taxonomy" id="632"/>
    <lineage>
        <taxon>Bacteria</taxon>
        <taxon>Pseudomonadati</taxon>
        <taxon>Pseudomonadota</taxon>
        <taxon>Gammaproteobacteria</taxon>
        <taxon>Enterobacterales</taxon>
        <taxon>Yersiniaceae</taxon>
        <taxon>Yersinia</taxon>
    </lineage>
</organism>
<protein>
    <recommendedName>
        <fullName evidence="1">Bifunctional protein HldE</fullName>
    </recommendedName>
    <domain>
        <recommendedName>
            <fullName evidence="1">D-beta-D-heptose 7-phosphate kinase</fullName>
            <ecNumber evidence="1">2.7.1.167</ecNumber>
        </recommendedName>
        <alternativeName>
            <fullName evidence="1">D-beta-D-heptose 7-phosphotransferase</fullName>
        </alternativeName>
        <alternativeName>
            <fullName evidence="1">D-glycero-beta-D-manno-heptose-7-phosphate kinase</fullName>
        </alternativeName>
    </domain>
    <domain>
        <recommendedName>
            <fullName evidence="1">D-beta-D-heptose 1-phosphate adenylyltransferase</fullName>
            <ecNumber evidence="1">2.7.7.70</ecNumber>
        </recommendedName>
        <alternativeName>
            <fullName evidence="1">D-glycero-beta-D-manno-heptose 1-phosphate adenylyltransferase</fullName>
        </alternativeName>
    </domain>
</protein>
<feature type="chain" id="PRO_0000080133" description="Bifunctional protein HldE">
    <location>
        <begin position="1"/>
        <end position="476"/>
    </location>
</feature>
<feature type="region of interest" description="Ribokinase">
    <location>
        <begin position="1"/>
        <end position="318"/>
    </location>
</feature>
<feature type="region of interest" description="Cytidylyltransferase">
    <location>
        <begin position="344"/>
        <end position="476"/>
    </location>
</feature>
<feature type="active site" evidence="1">
    <location>
        <position position="264"/>
    </location>
</feature>
<feature type="binding site" evidence="1">
    <location>
        <begin position="195"/>
        <end position="198"/>
    </location>
    <ligand>
        <name>ATP</name>
        <dbReference type="ChEBI" id="CHEBI:30616"/>
    </ligand>
</feature>